<comment type="function">
    <text evidence="1">Thiol-specific peroxidase that catalyzes the reduction of hydrogen peroxide and organic hydroperoxides to water and alcohols, respectively. Plays a role in cell protection against oxidative stress by detoxifying peroxides and as sensor of hydrogen peroxide-mediated signaling events.</text>
</comment>
<comment type="catalytic activity">
    <reaction evidence="1">
        <text>a hydroperoxide + [thioredoxin]-dithiol = an alcohol + [thioredoxin]-disulfide + H2O</text>
        <dbReference type="Rhea" id="RHEA:62620"/>
        <dbReference type="Rhea" id="RHEA-COMP:10698"/>
        <dbReference type="Rhea" id="RHEA-COMP:10700"/>
        <dbReference type="ChEBI" id="CHEBI:15377"/>
        <dbReference type="ChEBI" id="CHEBI:29950"/>
        <dbReference type="ChEBI" id="CHEBI:30879"/>
        <dbReference type="ChEBI" id="CHEBI:35924"/>
        <dbReference type="ChEBI" id="CHEBI:50058"/>
        <dbReference type="EC" id="1.11.1.24"/>
    </reaction>
</comment>
<comment type="subunit">
    <text evidence="1">Homodimer; disulfide-linked, upon oxidation.</text>
</comment>
<comment type="miscellaneous">
    <text evidence="1">The active site is a conserved redox-active cysteine residue, the peroxidatic cysteine (C(P)), which makes the nucleophilic attack on the peroxide substrate. The peroxide oxidizes the C(P)-SH to cysteine sulfenic acid (C(P)-SOH), which then reacts with another cysteine residue, the resolving cysteine (C(R)), to form a disulfide bridge. The disulfide is subsequently reduced by an appropriate electron donor to complete the catalytic cycle. In this typical 2-Cys peroxiredoxin, C(R) is provided by the other dimeric subunit to form an intersubunit disulfide. The disulfide is subsequently reduced by thioredoxin.</text>
</comment>
<comment type="similarity">
    <text evidence="3">Belongs to the peroxiredoxin family. AhpC/Prx1 subfamily.</text>
</comment>
<organism>
    <name type="scientific">Brugia malayi</name>
    <name type="common">Filarial nematode worm</name>
    <dbReference type="NCBI Taxonomy" id="6279"/>
    <lineage>
        <taxon>Eukaryota</taxon>
        <taxon>Metazoa</taxon>
        <taxon>Ecdysozoa</taxon>
        <taxon>Nematoda</taxon>
        <taxon>Chromadorea</taxon>
        <taxon>Rhabditida</taxon>
        <taxon>Spirurina</taxon>
        <taxon>Spiruromorpha</taxon>
        <taxon>Filarioidea</taxon>
        <taxon>Onchocercidae</taxon>
        <taxon>Brugia</taxon>
    </lineage>
</organism>
<name>TDX2_BRUMA</name>
<dbReference type="EC" id="1.11.1.24" evidence="1"/>
<dbReference type="EMBL" id="U47100">
    <property type="protein sequence ID" value="AAB67873.1"/>
    <property type="molecule type" value="mRNA"/>
</dbReference>
<dbReference type="SMR" id="Q17172"/>
<dbReference type="FunCoup" id="Q17172">
    <property type="interactions" value="946"/>
</dbReference>
<dbReference type="STRING" id="6279.Q17172"/>
<dbReference type="PeroxiBase" id="4489">
    <property type="entry name" value="Bmal2CysPrx02"/>
</dbReference>
<dbReference type="InParanoid" id="Q17172"/>
<dbReference type="Proteomes" id="UP000006672">
    <property type="component" value="Unassembled WGS sequence"/>
</dbReference>
<dbReference type="GO" id="GO:0005829">
    <property type="term" value="C:cytosol"/>
    <property type="evidence" value="ECO:0007669"/>
    <property type="project" value="TreeGrafter"/>
</dbReference>
<dbReference type="GO" id="GO:0008379">
    <property type="term" value="F:thioredoxin peroxidase activity"/>
    <property type="evidence" value="ECO:0007669"/>
    <property type="project" value="TreeGrafter"/>
</dbReference>
<dbReference type="GO" id="GO:0045454">
    <property type="term" value="P:cell redox homeostasis"/>
    <property type="evidence" value="ECO:0007669"/>
    <property type="project" value="TreeGrafter"/>
</dbReference>
<dbReference type="GO" id="GO:0042744">
    <property type="term" value="P:hydrogen peroxide catabolic process"/>
    <property type="evidence" value="ECO:0007669"/>
    <property type="project" value="TreeGrafter"/>
</dbReference>
<dbReference type="GO" id="GO:0019430">
    <property type="term" value="P:removal of superoxide radicals"/>
    <property type="evidence" value="ECO:0007669"/>
    <property type="project" value="TreeGrafter"/>
</dbReference>
<dbReference type="CDD" id="cd03015">
    <property type="entry name" value="PRX_Typ2cys"/>
    <property type="match status" value="1"/>
</dbReference>
<dbReference type="FunFam" id="3.40.30.10:FF:000003">
    <property type="entry name" value="Peroxiredoxin 1"/>
    <property type="match status" value="1"/>
</dbReference>
<dbReference type="Gene3D" id="3.40.30.10">
    <property type="entry name" value="Glutaredoxin"/>
    <property type="match status" value="1"/>
</dbReference>
<dbReference type="InterPro" id="IPR000866">
    <property type="entry name" value="AhpC/TSA"/>
</dbReference>
<dbReference type="InterPro" id="IPR050217">
    <property type="entry name" value="Peroxiredoxin"/>
</dbReference>
<dbReference type="InterPro" id="IPR024706">
    <property type="entry name" value="Peroxiredoxin_AhpC-typ"/>
</dbReference>
<dbReference type="InterPro" id="IPR019479">
    <property type="entry name" value="Peroxiredoxin_C"/>
</dbReference>
<dbReference type="InterPro" id="IPR036249">
    <property type="entry name" value="Thioredoxin-like_sf"/>
</dbReference>
<dbReference type="InterPro" id="IPR013766">
    <property type="entry name" value="Thioredoxin_domain"/>
</dbReference>
<dbReference type="PANTHER" id="PTHR10681:SF163">
    <property type="entry name" value="AT16346P-RELATED"/>
    <property type="match status" value="1"/>
</dbReference>
<dbReference type="PANTHER" id="PTHR10681">
    <property type="entry name" value="THIOREDOXIN PEROXIDASE"/>
    <property type="match status" value="1"/>
</dbReference>
<dbReference type="Pfam" id="PF10417">
    <property type="entry name" value="1-cysPrx_C"/>
    <property type="match status" value="1"/>
</dbReference>
<dbReference type="Pfam" id="PF00578">
    <property type="entry name" value="AhpC-TSA"/>
    <property type="match status" value="1"/>
</dbReference>
<dbReference type="PIRSF" id="PIRSF000239">
    <property type="entry name" value="AHPC"/>
    <property type="match status" value="1"/>
</dbReference>
<dbReference type="SUPFAM" id="SSF52833">
    <property type="entry name" value="Thioredoxin-like"/>
    <property type="match status" value="1"/>
</dbReference>
<dbReference type="PROSITE" id="PS51352">
    <property type="entry name" value="THIOREDOXIN_2"/>
    <property type="match status" value="1"/>
</dbReference>
<reference key="1">
    <citation type="submission" date="1996-02" db="EMBL/GenBank/DDBJ databases">
        <authorList>
            <person name="Ghosh I."/>
            <person name="Raghavan N."/>
            <person name="Blaxter M.L."/>
            <person name="Scott A.L."/>
        </authorList>
    </citation>
    <scope>NUCLEOTIDE SEQUENCE [MRNA]</scope>
</reference>
<reference key="2">
    <citation type="submission" date="1997-08" db="EMBL/GenBank/DDBJ databases">
        <authorList>
            <person name="Scott A.L."/>
            <person name="Ghosh I."/>
            <person name="Raghavan N."/>
            <person name="Blaxter M.L."/>
        </authorList>
    </citation>
    <scope>SEQUENCE REVISION TO 176-189</scope>
</reference>
<feature type="chain" id="PRO_0000135090" description="Peroxiredoxin 2">
    <location>
        <begin position="1"/>
        <end position="199"/>
    </location>
</feature>
<feature type="domain" description="Thioredoxin" evidence="2">
    <location>
        <begin position="8"/>
        <end position="166"/>
    </location>
</feature>
<feature type="active site" description="Cysteine sulfenic acid (-SOH) intermediate" evidence="1">
    <location>
        <position position="53"/>
    </location>
</feature>
<feature type="disulfide bond" description="Interchain (with C-174); in linked form" evidence="1">
    <location>
        <position position="53"/>
    </location>
</feature>
<feature type="disulfide bond" description="Interchain (with C-53); in linked form" evidence="1">
    <location>
        <position position="174"/>
    </location>
</feature>
<evidence type="ECO:0000250" key="1">
    <source>
        <dbReference type="UniProtKB" id="Q06830"/>
    </source>
</evidence>
<evidence type="ECO:0000255" key="2">
    <source>
        <dbReference type="PROSITE-ProRule" id="PRU00691"/>
    </source>
</evidence>
<evidence type="ECO:0000305" key="3"/>
<sequence>MTLAGSKAFIGQPAPNFKTTAVVNGDFKEISLGQFKGKYVVLLFYPLDFTFVCPTEIIAFSDRIAEFKQLDVAVMACSTDSHFSHLAWVNTDRKMGGLGQMNIPILAYTNHVISRAYGVLKEDDGIAYRGLFIIDPKGILGQITINDLPVGRSVDETLRLIQAFQFVDKHGEVCPANWHPGSETIKPGVKESKAYFEKH</sequence>
<accession>Q17172</accession>
<protein>
    <recommendedName>
        <fullName>Peroxiredoxin 2</fullName>
        <ecNumber evidence="1">1.11.1.24</ecNumber>
    </recommendedName>
    <alternativeName>
        <fullName>Thiol-specific antioxidant protein 2</fullName>
    </alternativeName>
    <alternativeName>
        <fullName>Thioredoxin peroxidase 2</fullName>
    </alternativeName>
    <alternativeName>
        <fullName>Thioredoxin-dependent peroxide reductase 2</fullName>
    </alternativeName>
    <alternativeName>
        <fullName evidence="3">Thioredoxin-dependent peroxiredoxin 2</fullName>
    </alternativeName>
</protein>
<keyword id="KW-0049">Antioxidant</keyword>
<keyword id="KW-1015">Disulfide bond</keyword>
<keyword id="KW-0560">Oxidoreductase</keyword>
<keyword id="KW-0575">Peroxidase</keyword>
<keyword id="KW-0676">Redox-active center</keyword>
<keyword id="KW-1185">Reference proteome</keyword>
<proteinExistence type="evidence at transcript level"/>
<gene>
    <name type="primary">tsa-2</name>
    <name type="synonym">tsa2</name>
</gene>